<evidence type="ECO:0000255" key="1">
    <source>
        <dbReference type="HAMAP-Rule" id="MF_00736"/>
    </source>
</evidence>
<evidence type="ECO:0000305" key="2"/>
<organism>
    <name type="scientific">Nitratiruptor sp. (strain SB155-2)</name>
    <dbReference type="NCBI Taxonomy" id="387092"/>
    <lineage>
        <taxon>Bacteria</taxon>
        <taxon>Pseudomonadati</taxon>
        <taxon>Campylobacterota</taxon>
        <taxon>Epsilonproteobacteria</taxon>
        <taxon>Nautiliales</taxon>
        <taxon>Nitratiruptoraceae</taxon>
        <taxon>Nitratiruptor</taxon>
    </lineage>
</organism>
<reference key="1">
    <citation type="journal article" date="2007" name="Proc. Natl. Acad. Sci. U.S.A.">
        <title>Deep-sea vent epsilon-proteobacterial genomes provide insights into emergence of pathogens.</title>
        <authorList>
            <person name="Nakagawa S."/>
            <person name="Takaki Y."/>
            <person name="Shimamura S."/>
            <person name="Reysenbach A.-L."/>
            <person name="Takai K."/>
            <person name="Horikoshi K."/>
        </authorList>
    </citation>
    <scope>NUCLEOTIDE SEQUENCE [LARGE SCALE GENOMIC DNA]</scope>
    <source>
        <strain>SB155-2</strain>
    </source>
</reference>
<feature type="chain" id="PRO_1000046229" description="Large ribosomal subunit protein uL11">
    <location>
        <begin position="1"/>
        <end position="141"/>
    </location>
</feature>
<dbReference type="EMBL" id="AP009178">
    <property type="protein sequence ID" value="BAF69378.1"/>
    <property type="molecule type" value="Genomic_DNA"/>
</dbReference>
<dbReference type="RefSeq" id="WP_012081641.1">
    <property type="nucleotide sequence ID" value="NC_009662.1"/>
</dbReference>
<dbReference type="SMR" id="A6Q1L9"/>
<dbReference type="FunCoup" id="A6Q1L9">
    <property type="interactions" value="517"/>
</dbReference>
<dbReference type="STRING" id="387092.NIS_0264"/>
<dbReference type="KEGG" id="nis:NIS_0264"/>
<dbReference type="eggNOG" id="COG0080">
    <property type="taxonomic scope" value="Bacteria"/>
</dbReference>
<dbReference type="HOGENOM" id="CLU_074237_2_0_7"/>
<dbReference type="InParanoid" id="A6Q1L9"/>
<dbReference type="OrthoDB" id="9802408at2"/>
<dbReference type="Proteomes" id="UP000001118">
    <property type="component" value="Chromosome"/>
</dbReference>
<dbReference type="GO" id="GO:0022625">
    <property type="term" value="C:cytosolic large ribosomal subunit"/>
    <property type="evidence" value="ECO:0007669"/>
    <property type="project" value="TreeGrafter"/>
</dbReference>
<dbReference type="GO" id="GO:0070180">
    <property type="term" value="F:large ribosomal subunit rRNA binding"/>
    <property type="evidence" value="ECO:0007669"/>
    <property type="project" value="UniProtKB-UniRule"/>
</dbReference>
<dbReference type="GO" id="GO:0003735">
    <property type="term" value="F:structural constituent of ribosome"/>
    <property type="evidence" value="ECO:0007669"/>
    <property type="project" value="InterPro"/>
</dbReference>
<dbReference type="GO" id="GO:0006412">
    <property type="term" value="P:translation"/>
    <property type="evidence" value="ECO:0007669"/>
    <property type="project" value="UniProtKB-UniRule"/>
</dbReference>
<dbReference type="CDD" id="cd00349">
    <property type="entry name" value="Ribosomal_L11"/>
    <property type="match status" value="1"/>
</dbReference>
<dbReference type="FunFam" id="1.10.10.250:FF:000001">
    <property type="entry name" value="50S ribosomal protein L11"/>
    <property type="match status" value="1"/>
</dbReference>
<dbReference type="FunFam" id="3.30.1550.10:FF:000001">
    <property type="entry name" value="50S ribosomal protein L11"/>
    <property type="match status" value="1"/>
</dbReference>
<dbReference type="Gene3D" id="1.10.10.250">
    <property type="entry name" value="Ribosomal protein L11, C-terminal domain"/>
    <property type="match status" value="1"/>
</dbReference>
<dbReference type="Gene3D" id="3.30.1550.10">
    <property type="entry name" value="Ribosomal protein L11/L12, N-terminal domain"/>
    <property type="match status" value="1"/>
</dbReference>
<dbReference type="HAMAP" id="MF_00736">
    <property type="entry name" value="Ribosomal_uL11"/>
    <property type="match status" value="1"/>
</dbReference>
<dbReference type="InterPro" id="IPR000911">
    <property type="entry name" value="Ribosomal_uL11"/>
</dbReference>
<dbReference type="InterPro" id="IPR006519">
    <property type="entry name" value="Ribosomal_uL11_bac-typ"/>
</dbReference>
<dbReference type="InterPro" id="IPR020783">
    <property type="entry name" value="Ribosomal_uL11_C"/>
</dbReference>
<dbReference type="InterPro" id="IPR036769">
    <property type="entry name" value="Ribosomal_uL11_C_sf"/>
</dbReference>
<dbReference type="InterPro" id="IPR020785">
    <property type="entry name" value="Ribosomal_uL11_CS"/>
</dbReference>
<dbReference type="InterPro" id="IPR020784">
    <property type="entry name" value="Ribosomal_uL11_N"/>
</dbReference>
<dbReference type="InterPro" id="IPR036796">
    <property type="entry name" value="Ribosomal_uL11_N_sf"/>
</dbReference>
<dbReference type="NCBIfam" id="TIGR01632">
    <property type="entry name" value="L11_bact"/>
    <property type="match status" value="1"/>
</dbReference>
<dbReference type="PANTHER" id="PTHR11661">
    <property type="entry name" value="60S RIBOSOMAL PROTEIN L12"/>
    <property type="match status" value="1"/>
</dbReference>
<dbReference type="PANTHER" id="PTHR11661:SF1">
    <property type="entry name" value="LARGE RIBOSOMAL SUBUNIT PROTEIN UL11M"/>
    <property type="match status" value="1"/>
</dbReference>
<dbReference type="Pfam" id="PF00298">
    <property type="entry name" value="Ribosomal_L11"/>
    <property type="match status" value="1"/>
</dbReference>
<dbReference type="Pfam" id="PF03946">
    <property type="entry name" value="Ribosomal_L11_N"/>
    <property type="match status" value="1"/>
</dbReference>
<dbReference type="SMART" id="SM00649">
    <property type="entry name" value="RL11"/>
    <property type="match status" value="1"/>
</dbReference>
<dbReference type="SUPFAM" id="SSF54747">
    <property type="entry name" value="Ribosomal L11/L12e N-terminal domain"/>
    <property type="match status" value="1"/>
</dbReference>
<dbReference type="SUPFAM" id="SSF46906">
    <property type="entry name" value="Ribosomal protein L11, C-terminal domain"/>
    <property type="match status" value="1"/>
</dbReference>
<dbReference type="PROSITE" id="PS00359">
    <property type="entry name" value="RIBOSOMAL_L11"/>
    <property type="match status" value="1"/>
</dbReference>
<comment type="function">
    <text evidence="1">Forms part of the ribosomal stalk which helps the ribosome interact with GTP-bound translation factors.</text>
</comment>
<comment type="subunit">
    <text evidence="1">Part of the ribosomal stalk of the 50S ribosomal subunit. Interacts with L10 and the large rRNA to form the base of the stalk. L10 forms an elongated spine to which L12 dimers bind in a sequential fashion forming a multimeric L10(L12)X complex.</text>
</comment>
<comment type="PTM">
    <text evidence="1">One or more lysine residues are methylated.</text>
</comment>
<comment type="similarity">
    <text evidence="1">Belongs to the universal ribosomal protein uL11 family.</text>
</comment>
<protein>
    <recommendedName>
        <fullName evidence="1">Large ribosomal subunit protein uL11</fullName>
    </recommendedName>
    <alternativeName>
        <fullName evidence="2">50S ribosomal protein L11</fullName>
    </alternativeName>
</protein>
<name>RL11_NITSB</name>
<keyword id="KW-0488">Methylation</keyword>
<keyword id="KW-1185">Reference proteome</keyword>
<keyword id="KW-0687">Ribonucleoprotein</keyword>
<keyword id="KW-0689">Ribosomal protein</keyword>
<keyword id="KW-0694">RNA-binding</keyword>
<keyword id="KW-0699">rRNA-binding</keyword>
<proteinExistence type="inferred from homology"/>
<gene>
    <name evidence="1" type="primary">rplK</name>
    <name type="ordered locus">NIS_0264</name>
</gene>
<accession>A6Q1L9</accession>
<sequence>MAKKVVDQFKLQIPAGKANPSPPVGPALGQRGVNIMEFCKAFNEKTKDMMGFNIPVVITVYSDRSFTFVTKQPPATDLIKKAAGIQKGSDNPLKNKVGKITQAQLEEIAKTKMPDLNTTDLEAAKRIIAGSCRSMGVEIVD</sequence>